<organism>
    <name type="scientific">Ureaplasma parvum serovar 3 (strain ATCC 27815 / 27 / NCTC 11736)</name>
    <dbReference type="NCBI Taxonomy" id="505682"/>
    <lineage>
        <taxon>Bacteria</taxon>
        <taxon>Bacillati</taxon>
        <taxon>Mycoplasmatota</taxon>
        <taxon>Mycoplasmoidales</taxon>
        <taxon>Mycoplasmoidaceae</taxon>
        <taxon>Ureaplasma</taxon>
    </lineage>
</organism>
<protein>
    <recommendedName>
        <fullName evidence="1">tRNA pseudouridine synthase A</fullName>
        <ecNumber evidence="1">5.4.99.12</ecNumber>
    </recommendedName>
    <alternativeName>
        <fullName evidence="1">tRNA pseudouridine(38-40) synthase</fullName>
    </alternativeName>
    <alternativeName>
        <fullName evidence="1">tRNA pseudouridylate synthase I</fullName>
    </alternativeName>
    <alternativeName>
        <fullName evidence="1">tRNA-uridine isomerase I</fullName>
    </alternativeName>
</protein>
<sequence length="241" mass="28198">MNYKISLRYDGSLFYGWARQPQKRTVQGDLEEIFKSIFKINNIRIIGSGRTDKGVHAYEQTFSVKHSALKYDSHIIYQALCSRTSSDIQILEVQKVDDSFHAQYNATSKTYQYVINDYEFDLFRNNYELFVNQKINDQKILEALELFVGEHDFKSFSTSELTMTIRRINWVKIKRDTHLIIYINANGFLKNMVRMIVASCLDYAFNKISLAKIHELLIYPKKGASIKLAPACGLYLYKVYY</sequence>
<proteinExistence type="inferred from homology"/>
<comment type="function">
    <text evidence="1">Formation of pseudouridine at positions 38, 39 and 40 in the anticodon stem and loop of transfer RNAs.</text>
</comment>
<comment type="catalytic activity">
    <reaction evidence="1">
        <text>uridine(38/39/40) in tRNA = pseudouridine(38/39/40) in tRNA</text>
        <dbReference type="Rhea" id="RHEA:22376"/>
        <dbReference type="Rhea" id="RHEA-COMP:10085"/>
        <dbReference type="Rhea" id="RHEA-COMP:10087"/>
        <dbReference type="ChEBI" id="CHEBI:65314"/>
        <dbReference type="ChEBI" id="CHEBI:65315"/>
        <dbReference type="EC" id="5.4.99.12"/>
    </reaction>
</comment>
<comment type="subunit">
    <text evidence="1">Homodimer.</text>
</comment>
<comment type="similarity">
    <text evidence="1">Belongs to the tRNA pseudouridine synthase TruA family.</text>
</comment>
<evidence type="ECO:0000255" key="1">
    <source>
        <dbReference type="HAMAP-Rule" id="MF_00171"/>
    </source>
</evidence>
<keyword id="KW-0413">Isomerase</keyword>
<keyword id="KW-0819">tRNA processing</keyword>
<accession>B1AJH7</accession>
<feature type="chain" id="PRO_1000077109" description="tRNA pseudouridine synthase A">
    <location>
        <begin position="1"/>
        <end position="241"/>
    </location>
</feature>
<feature type="active site" description="Nucleophile" evidence="1">
    <location>
        <position position="52"/>
    </location>
</feature>
<feature type="binding site" evidence="1">
    <location>
        <position position="111"/>
    </location>
    <ligand>
        <name>substrate</name>
    </ligand>
</feature>
<name>TRUA_UREP2</name>
<gene>
    <name evidence="1" type="primary">truA</name>
    <name type="ordered locus">UPA3_0573</name>
</gene>
<reference key="1">
    <citation type="submission" date="2008-02" db="EMBL/GenBank/DDBJ databases">
        <title>Genome sequence of Ureaplasma parvum serovar 3.</title>
        <authorList>
            <person name="Methe B.A."/>
            <person name="Glass J."/>
            <person name="Waites K."/>
            <person name="Shrivastava S."/>
        </authorList>
    </citation>
    <scope>NUCLEOTIDE SEQUENCE [LARGE SCALE GENOMIC DNA]</scope>
    <source>
        <strain>ATCC 27815 / 27 / NCTC 11736</strain>
    </source>
</reference>
<dbReference type="EC" id="5.4.99.12" evidence="1"/>
<dbReference type="EMBL" id="CP000942">
    <property type="protein sequence ID" value="ACA32786.1"/>
    <property type="molecule type" value="Genomic_DNA"/>
</dbReference>
<dbReference type="RefSeq" id="WP_006689087.1">
    <property type="nucleotide sequence ID" value="NC_010503.1"/>
</dbReference>
<dbReference type="SMR" id="B1AJH7"/>
<dbReference type="GeneID" id="29672419"/>
<dbReference type="KEGG" id="upa:UPA3_0573"/>
<dbReference type="HOGENOM" id="CLU_014673_0_1_14"/>
<dbReference type="Proteomes" id="UP000002162">
    <property type="component" value="Chromosome"/>
</dbReference>
<dbReference type="GO" id="GO:0003723">
    <property type="term" value="F:RNA binding"/>
    <property type="evidence" value="ECO:0007669"/>
    <property type="project" value="InterPro"/>
</dbReference>
<dbReference type="GO" id="GO:0160147">
    <property type="term" value="F:tRNA pseudouridine(38-40) synthase activity"/>
    <property type="evidence" value="ECO:0007669"/>
    <property type="project" value="UniProtKB-EC"/>
</dbReference>
<dbReference type="GO" id="GO:0031119">
    <property type="term" value="P:tRNA pseudouridine synthesis"/>
    <property type="evidence" value="ECO:0007669"/>
    <property type="project" value="UniProtKB-UniRule"/>
</dbReference>
<dbReference type="CDD" id="cd02570">
    <property type="entry name" value="PseudoU_synth_EcTruA"/>
    <property type="match status" value="1"/>
</dbReference>
<dbReference type="Gene3D" id="3.30.70.660">
    <property type="entry name" value="Pseudouridine synthase I, catalytic domain, C-terminal subdomain"/>
    <property type="match status" value="1"/>
</dbReference>
<dbReference type="Gene3D" id="3.30.70.580">
    <property type="entry name" value="Pseudouridine synthase I, catalytic domain, N-terminal subdomain"/>
    <property type="match status" value="1"/>
</dbReference>
<dbReference type="HAMAP" id="MF_00171">
    <property type="entry name" value="TruA"/>
    <property type="match status" value="1"/>
</dbReference>
<dbReference type="InterPro" id="IPR020103">
    <property type="entry name" value="PsdUridine_synth_cat_dom_sf"/>
</dbReference>
<dbReference type="InterPro" id="IPR001406">
    <property type="entry name" value="PsdUridine_synth_TruA"/>
</dbReference>
<dbReference type="InterPro" id="IPR020097">
    <property type="entry name" value="PsdUridine_synth_TruA_a/b_dom"/>
</dbReference>
<dbReference type="InterPro" id="IPR020095">
    <property type="entry name" value="PsdUridine_synth_TruA_C"/>
</dbReference>
<dbReference type="InterPro" id="IPR020094">
    <property type="entry name" value="TruA/RsuA/RluB/E/F_N"/>
</dbReference>
<dbReference type="NCBIfam" id="TIGR00071">
    <property type="entry name" value="hisT_truA"/>
    <property type="match status" value="1"/>
</dbReference>
<dbReference type="PANTHER" id="PTHR11142">
    <property type="entry name" value="PSEUDOURIDYLATE SYNTHASE"/>
    <property type="match status" value="1"/>
</dbReference>
<dbReference type="PANTHER" id="PTHR11142:SF0">
    <property type="entry name" value="TRNA PSEUDOURIDINE SYNTHASE-LIKE 1"/>
    <property type="match status" value="1"/>
</dbReference>
<dbReference type="Pfam" id="PF01416">
    <property type="entry name" value="PseudoU_synth_1"/>
    <property type="match status" value="2"/>
</dbReference>
<dbReference type="PIRSF" id="PIRSF001430">
    <property type="entry name" value="tRNA_psdUrid_synth"/>
    <property type="match status" value="1"/>
</dbReference>
<dbReference type="SUPFAM" id="SSF55120">
    <property type="entry name" value="Pseudouridine synthase"/>
    <property type="match status" value="1"/>
</dbReference>